<accession>A5FUZ5</accession>
<gene>
    <name evidence="1" type="primary">htpX</name>
    <name type="ordered locus">Acry_0199</name>
</gene>
<organism>
    <name type="scientific">Acidiphilium cryptum (strain JF-5)</name>
    <dbReference type="NCBI Taxonomy" id="349163"/>
    <lineage>
        <taxon>Bacteria</taxon>
        <taxon>Pseudomonadati</taxon>
        <taxon>Pseudomonadota</taxon>
        <taxon>Alphaproteobacteria</taxon>
        <taxon>Acetobacterales</taxon>
        <taxon>Acidocellaceae</taxon>
        <taxon>Acidiphilium</taxon>
    </lineage>
</organism>
<proteinExistence type="inferred from homology"/>
<name>HTPX_ACICJ</name>
<keyword id="KW-0997">Cell inner membrane</keyword>
<keyword id="KW-1003">Cell membrane</keyword>
<keyword id="KW-0378">Hydrolase</keyword>
<keyword id="KW-0472">Membrane</keyword>
<keyword id="KW-0479">Metal-binding</keyword>
<keyword id="KW-0482">Metalloprotease</keyword>
<keyword id="KW-0645">Protease</keyword>
<keyword id="KW-1185">Reference proteome</keyword>
<keyword id="KW-0812">Transmembrane</keyword>
<keyword id="KW-1133">Transmembrane helix</keyword>
<keyword id="KW-0862">Zinc</keyword>
<evidence type="ECO:0000255" key="1">
    <source>
        <dbReference type="HAMAP-Rule" id="MF_00188"/>
    </source>
</evidence>
<feature type="chain" id="PRO_1000077441" description="Protease HtpX homolog">
    <location>
        <begin position="1"/>
        <end position="287"/>
    </location>
</feature>
<feature type="transmembrane region" description="Helical" evidence="1">
    <location>
        <begin position="5"/>
        <end position="25"/>
    </location>
</feature>
<feature type="transmembrane region" description="Helical" evidence="1">
    <location>
        <begin position="28"/>
        <end position="48"/>
    </location>
</feature>
<feature type="transmembrane region" description="Helical" evidence="1">
    <location>
        <begin position="146"/>
        <end position="166"/>
    </location>
</feature>
<feature type="transmembrane region" description="Helical" evidence="1">
    <location>
        <begin position="174"/>
        <end position="194"/>
    </location>
</feature>
<feature type="active site" evidence="1">
    <location>
        <position position="132"/>
    </location>
</feature>
<feature type="binding site" evidence="1">
    <location>
        <position position="131"/>
    </location>
    <ligand>
        <name>Zn(2+)</name>
        <dbReference type="ChEBI" id="CHEBI:29105"/>
        <note>catalytic</note>
    </ligand>
</feature>
<feature type="binding site" evidence="1">
    <location>
        <position position="135"/>
    </location>
    <ligand>
        <name>Zn(2+)</name>
        <dbReference type="ChEBI" id="CHEBI:29105"/>
        <note>catalytic</note>
    </ligand>
</feature>
<feature type="binding site" evidence="1">
    <location>
        <position position="203"/>
    </location>
    <ligand>
        <name>Zn(2+)</name>
        <dbReference type="ChEBI" id="CHEBI:29105"/>
        <note>catalytic</note>
    </ligand>
</feature>
<dbReference type="EC" id="3.4.24.-" evidence="1"/>
<dbReference type="EMBL" id="CP000697">
    <property type="protein sequence ID" value="ABQ29427.1"/>
    <property type="molecule type" value="Genomic_DNA"/>
</dbReference>
<dbReference type="RefSeq" id="WP_011941346.1">
    <property type="nucleotide sequence ID" value="NC_009484.1"/>
</dbReference>
<dbReference type="SMR" id="A5FUZ5"/>
<dbReference type="STRING" id="349163.Acry_0199"/>
<dbReference type="KEGG" id="acr:Acry_0199"/>
<dbReference type="eggNOG" id="COG0501">
    <property type="taxonomic scope" value="Bacteria"/>
</dbReference>
<dbReference type="HOGENOM" id="CLU_042266_3_0_5"/>
<dbReference type="Proteomes" id="UP000000245">
    <property type="component" value="Chromosome"/>
</dbReference>
<dbReference type="GO" id="GO:0005886">
    <property type="term" value="C:plasma membrane"/>
    <property type="evidence" value="ECO:0007669"/>
    <property type="project" value="UniProtKB-SubCell"/>
</dbReference>
<dbReference type="GO" id="GO:0004222">
    <property type="term" value="F:metalloendopeptidase activity"/>
    <property type="evidence" value="ECO:0007669"/>
    <property type="project" value="UniProtKB-UniRule"/>
</dbReference>
<dbReference type="GO" id="GO:0008270">
    <property type="term" value="F:zinc ion binding"/>
    <property type="evidence" value="ECO:0007669"/>
    <property type="project" value="UniProtKB-UniRule"/>
</dbReference>
<dbReference type="GO" id="GO:0006508">
    <property type="term" value="P:proteolysis"/>
    <property type="evidence" value="ECO:0007669"/>
    <property type="project" value="UniProtKB-KW"/>
</dbReference>
<dbReference type="CDD" id="cd07336">
    <property type="entry name" value="M48B_HtpX_like"/>
    <property type="match status" value="1"/>
</dbReference>
<dbReference type="Gene3D" id="3.30.2010.10">
    <property type="entry name" value="Metalloproteases ('zincins'), catalytic domain"/>
    <property type="match status" value="1"/>
</dbReference>
<dbReference type="HAMAP" id="MF_00188">
    <property type="entry name" value="Pept_M48_protease_HtpX"/>
    <property type="match status" value="1"/>
</dbReference>
<dbReference type="InterPro" id="IPR050083">
    <property type="entry name" value="HtpX_protease"/>
</dbReference>
<dbReference type="InterPro" id="IPR022919">
    <property type="entry name" value="Pept_M48_protease_HtpX"/>
</dbReference>
<dbReference type="InterPro" id="IPR001915">
    <property type="entry name" value="Peptidase_M48"/>
</dbReference>
<dbReference type="PANTHER" id="PTHR43221">
    <property type="entry name" value="PROTEASE HTPX"/>
    <property type="match status" value="1"/>
</dbReference>
<dbReference type="PANTHER" id="PTHR43221:SF1">
    <property type="entry name" value="PROTEASE HTPX"/>
    <property type="match status" value="1"/>
</dbReference>
<dbReference type="Pfam" id="PF01435">
    <property type="entry name" value="Peptidase_M48"/>
    <property type="match status" value="1"/>
</dbReference>
<reference key="1">
    <citation type="submission" date="2007-05" db="EMBL/GenBank/DDBJ databases">
        <title>Complete sequence of chromosome of Acidiphilium cryptum JF-5.</title>
        <authorList>
            <consortium name="US DOE Joint Genome Institute"/>
            <person name="Copeland A."/>
            <person name="Lucas S."/>
            <person name="Lapidus A."/>
            <person name="Barry K."/>
            <person name="Detter J.C."/>
            <person name="Glavina del Rio T."/>
            <person name="Hammon N."/>
            <person name="Israni S."/>
            <person name="Dalin E."/>
            <person name="Tice H."/>
            <person name="Pitluck S."/>
            <person name="Sims D."/>
            <person name="Brettin T."/>
            <person name="Bruce D."/>
            <person name="Han C."/>
            <person name="Schmutz J."/>
            <person name="Larimer F."/>
            <person name="Land M."/>
            <person name="Hauser L."/>
            <person name="Kyrpides N."/>
            <person name="Kim E."/>
            <person name="Magnuson T."/>
            <person name="Richardson P."/>
        </authorList>
    </citation>
    <scope>NUCLEOTIDE SEQUENCE [LARGE SCALE GENOMIC DNA]</scope>
    <source>
        <strain>JF-5</strain>
    </source>
</reference>
<protein>
    <recommendedName>
        <fullName evidence="1">Protease HtpX homolog</fullName>
        <ecNumber evidence="1">3.4.24.-</ecNumber>
    </recommendedName>
</protein>
<sequence>MPNLIRTGLLMAALTALFVAIGYWIGRGAGAAIALAFAAAGNFVAYWVSDRAVLAMYGAQPANQAAFPRLVAQVDRLASKAGLPPPRVYVIDNDQPNAFATGRNPQHAAIAVTTGLLGALDEAELAGVIAHELSHIRHRDTLTMTVTATLAGAIGMISNLAIFFGGSDERRSSPFAGIAGLLLLLLAPLTATLVQLAISRTREYAADARAASLTGQPLALARALMRIDEMARWVPNDDAERNPATASLFIVNPLSGTTFDTLFATHPPIRERVARLRHMAQFDVSKN</sequence>
<comment type="cofactor">
    <cofactor evidence="1">
        <name>Zn(2+)</name>
        <dbReference type="ChEBI" id="CHEBI:29105"/>
    </cofactor>
    <text evidence="1">Binds 1 zinc ion per subunit.</text>
</comment>
<comment type="subcellular location">
    <subcellularLocation>
        <location evidence="1">Cell inner membrane</location>
        <topology evidence="1">Multi-pass membrane protein</topology>
    </subcellularLocation>
</comment>
<comment type="similarity">
    <text evidence="1">Belongs to the peptidase M48B family.</text>
</comment>